<dbReference type="EC" id="3.4.24.-" evidence="1"/>
<dbReference type="EMBL" id="CP000384">
    <property type="protein sequence ID" value="ABG06892.1"/>
    <property type="molecule type" value="Genomic_DNA"/>
</dbReference>
<dbReference type="KEGG" id="mmc:Mmcs_0772"/>
<dbReference type="HOGENOM" id="CLU_042266_3_1_11"/>
<dbReference type="BioCyc" id="MSP164756:G1G6O-788-MONOMER"/>
<dbReference type="GO" id="GO:0005886">
    <property type="term" value="C:plasma membrane"/>
    <property type="evidence" value="ECO:0007669"/>
    <property type="project" value="UniProtKB-SubCell"/>
</dbReference>
<dbReference type="GO" id="GO:0004222">
    <property type="term" value="F:metalloendopeptidase activity"/>
    <property type="evidence" value="ECO:0007669"/>
    <property type="project" value="UniProtKB-UniRule"/>
</dbReference>
<dbReference type="GO" id="GO:0008270">
    <property type="term" value="F:zinc ion binding"/>
    <property type="evidence" value="ECO:0007669"/>
    <property type="project" value="UniProtKB-UniRule"/>
</dbReference>
<dbReference type="GO" id="GO:0006508">
    <property type="term" value="P:proteolysis"/>
    <property type="evidence" value="ECO:0007669"/>
    <property type="project" value="UniProtKB-KW"/>
</dbReference>
<dbReference type="CDD" id="cd07336">
    <property type="entry name" value="M48B_HtpX_like"/>
    <property type="match status" value="1"/>
</dbReference>
<dbReference type="Gene3D" id="3.30.2010.10">
    <property type="entry name" value="Metalloproteases ('zincins'), catalytic domain"/>
    <property type="match status" value="1"/>
</dbReference>
<dbReference type="HAMAP" id="MF_00188">
    <property type="entry name" value="Pept_M48_protease_HtpX"/>
    <property type="match status" value="1"/>
</dbReference>
<dbReference type="InterPro" id="IPR050083">
    <property type="entry name" value="HtpX_protease"/>
</dbReference>
<dbReference type="InterPro" id="IPR022919">
    <property type="entry name" value="Pept_M48_protease_HtpX"/>
</dbReference>
<dbReference type="InterPro" id="IPR001915">
    <property type="entry name" value="Peptidase_M48"/>
</dbReference>
<dbReference type="NCBIfam" id="NF002839">
    <property type="entry name" value="PRK03072.1"/>
    <property type="match status" value="1"/>
</dbReference>
<dbReference type="PANTHER" id="PTHR43221">
    <property type="entry name" value="PROTEASE HTPX"/>
    <property type="match status" value="1"/>
</dbReference>
<dbReference type="PANTHER" id="PTHR43221:SF1">
    <property type="entry name" value="PROTEASE HTPX"/>
    <property type="match status" value="1"/>
</dbReference>
<dbReference type="Pfam" id="PF01435">
    <property type="entry name" value="Peptidase_M48"/>
    <property type="match status" value="1"/>
</dbReference>
<dbReference type="PROSITE" id="PS00142">
    <property type="entry name" value="ZINC_PROTEASE"/>
    <property type="match status" value="1"/>
</dbReference>
<accession>Q1BDZ2</accession>
<keyword id="KW-1003">Cell membrane</keyword>
<keyword id="KW-0378">Hydrolase</keyword>
<keyword id="KW-0472">Membrane</keyword>
<keyword id="KW-0479">Metal-binding</keyword>
<keyword id="KW-0482">Metalloprotease</keyword>
<keyword id="KW-0645">Protease</keyword>
<keyword id="KW-0812">Transmembrane</keyword>
<keyword id="KW-1133">Transmembrane helix</keyword>
<keyword id="KW-0862">Zinc</keyword>
<evidence type="ECO:0000255" key="1">
    <source>
        <dbReference type="HAMAP-Rule" id="MF_00188"/>
    </source>
</evidence>
<organism>
    <name type="scientific">Mycobacterium sp. (strain MCS)</name>
    <dbReference type="NCBI Taxonomy" id="164756"/>
    <lineage>
        <taxon>Bacteria</taxon>
        <taxon>Bacillati</taxon>
        <taxon>Actinomycetota</taxon>
        <taxon>Actinomycetes</taxon>
        <taxon>Mycobacteriales</taxon>
        <taxon>Mycobacteriaceae</taxon>
        <taxon>Mycobacterium</taxon>
    </lineage>
</organism>
<gene>
    <name evidence="1" type="primary">htpX</name>
    <name type="ordered locus">Mmcs_0772</name>
</gene>
<protein>
    <recommendedName>
        <fullName evidence="1">Protease HtpX homolog</fullName>
        <ecNumber evidence="1">3.4.24.-</ecNumber>
    </recommendedName>
</protein>
<feature type="chain" id="PRO_1000020892" description="Protease HtpX homolog">
    <location>
        <begin position="1"/>
        <end position="291"/>
    </location>
</feature>
<feature type="transmembrane region" description="Helical" evidence="1">
    <location>
        <begin position="10"/>
        <end position="30"/>
    </location>
</feature>
<feature type="transmembrane region" description="Helical" evidence="1">
    <location>
        <begin position="33"/>
        <end position="53"/>
    </location>
</feature>
<feature type="transmembrane region" description="Helical" evidence="1">
    <location>
        <begin position="151"/>
        <end position="171"/>
    </location>
</feature>
<feature type="transmembrane region" description="Helical" evidence="1">
    <location>
        <begin position="181"/>
        <end position="201"/>
    </location>
</feature>
<feature type="active site" evidence="1">
    <location>
        <position position="136"/>
    </location>
</feature>
<feature type="binding site" evidence="1">
    <location>
        <position position="135"/>
    </location>
    <ligand>
        <name>Zn(2+)</name>
        <dbReference type="ChEBI" id="CHEBI:29105"/>
        <note>catalytic</note>
    </ligand>
</feature>
<feature type="binding site" evidence="1">
    <location>
        <position position="139"/>
    </location>
    <ligand>
        <name>Zn(2+)</name>
        <dbReference type="ChEBI" id="CHEBI:29105"/>
        <note>catalytic</note>
    </ligand>
</feature>
<feature type="binding site" evidence="1">
    <location>
        <position position="206"/>
    </location>
    <ligand>
        <name>Zn(2+)</name>
        <dbReference type="ChEBI" id="CHEBI:29105"/>
        <note>catalytic</note>
    </ligand>
</feature>
<name>HTPX_MYCSS</name>
<comment type="cofactor">
    <cofactor evidence="1">
        <name>Zn(2+)</name>
        <dbReference type="ChEBI" id="CHEBI:29105"/>
    </cofactor>
    <text evidence="1">Binds 1 zinc ion per subunit.</text>
</comment>
<comment type="subcellular location">
    <subcellularLocation>
        <location evidence="1">Cell membrane</location>
        <topology evidence="1">Multi-pass membrane protein</topology>
    </subcellularLocation>
</comment>
<comment type="similarity">
    <text evidence="1">Belongs to the peptidase M48B family.</text>
</comment>
<reference key="1">
    <citation type="submission" date="2006-06" db="EMBL/GenBank/DDBJ databases">
        <title>Complete sequence of chromosome of Mycobacterium sp. MCS.</title>
        <authorList>
            <consortium name="US DOE Joint Genome Institute"/>
            <person name="Copeland A."/>
            <person name="Lucas S."/>
            <person name="Lapidus A."/>
            <person name="Barry K."/>
            <person name="Detter J.C."/>
            <person name="Glavina del Rio T."/>
            <person name="Hammon N."/>
            <person name="Israni S."/>
            <person name="Dalin E."/>
            <person name="Tice H."/>
            <person name="Pitluck S."/>
            <person name="Martinez M."/>
            <person name="Schmutz J."/>
            <person name="Larimer F."/>
            <person name="Land M."/>
            <person name="Hauser L."/>
            <person name="Kyrpides N."/>
            <person name="Kim E."/>
            <person name="Miller C.D."/>
            <person name="Hughes J.E."/>
            <person name="Anderson A.J."/>
            <person name="Sims R.C."/>
            <person name="Richardson P."/>
        </authorList>
    </citation>
    <scope>NUCLEOTIDE SEQUENCE [LARGE SCALE GENOMIC DNA]</scope>
    <source>
        <strain>MCS</strain>
    </source>
</reference>
<proteinExistence type="inferred from homology"/>
<sequence length="291" mass="31372">MTWNPHANRFKTFLLLVGMSALIVFVGSLFGRSIMALAVLFAVGMNVYVYFNSDKLALKAMHAQPVSELQAPVMYRIVRELSNAAHQPMPRLYISDTANPNAFATGRNPRNSAVCCTTGILQILNERELRAVLGHELSHVYNRDILISCVAGAMASVITALANIALFAGMFGGNREGTNPFALLLVSFLGPIAATVVRLAVSRSREYQADQSGAELTGDPLALASALRKISGGVEAAPLPPQPQLADQAHLMIASPFRSGEKIGKLFSTHPPMADRIRRLEEMAGRGPGLY</sequence>